<gene>
    <name type="primary">NDUFB3</name>
</gene>
<comment type="function">
    <text evidence="7">Accessory subunit of the mitochondrial membrane respiratory chain NADH dehydrogenase (Complex I), that is believed not to be involved in catalysis. Complex I functions in the transfer of electrons from NADH to the respiratory chain. The immediate electron acceptor for the enzyme is believed to be ubiquinone.</text>
</comment>
<comment type="subunit">
    <text evidence="4 7">Complex I is composed of 45 different subunits.</text>
</comment>
<comment type="subcellular location">
    <subcellularLocation>
        <location evidence="10">Mitochondrion inner membrane</location>
        <topology evidence="9">Single-pass membrane protein</topology>
        <orientation evidence="9">Matrix side</orientation>
    </subcellularLocation>
</comment>
<comment type="PTM">
    <text evidence="8">Methylation at His residues by METTL9 enhances complex I-mediated mitochondrial respiration.</text>
</comment>
<comment type="disease" evidence="5 6">
    <disease id="DI-05421">
        <name>Mitochondrial complex I deficiency, nuclear type 25</name>
        <acronym>MC1DN25</acronym>
        <description>A form of mitochondrial complex I deficiency, the most common biochemical signature of mitochondrial disorders, a group of highly heterogeneous conditions characterized by defective oxidative phosphorylation, which collectively affects 1 in 5-10000 live births. Clinical disorders have variable severity, ranging from lethal neonatal disease to adult-onset neurodegenerative disorders. Phenotypes include macrocephaly with progressive leukodystrophy, non-specific encephalopathy, cardiomyopathy, myopathy, liver disease, Leigh syndrome, Leber hereditary optic neuropathy, and some forms of Parkinson disease. MC1DN25 transmission pattern is consistent with autosomal recessive inheritance.</description>
        <dbReference type="MIM" id="618246"/>
    </disease>
    <text>The disease is caused by variants affecting the gene represented in this entry.</text>
</comment>
<comment type="similarity">
    <text evidence="9">Belongs to the complex I NDUFB3 subunit family.</text>
</comment>
<keyword id="KW-0002">3D-structure</keyword>
<keyword id="KW-0007">Acetylation</keyword>
<keyword id="KW-0225">Disease variant</keyword>
<keyword id="KW-0249">Electron transport</keyword>
<keyword id="KW-0472">Membrane</keyword>
<keyword id="KW-0488">Methylation</keyword>
<keyword id="KW-0496">Mitochondrion</keyword>
<keyword id="KW-0999">Mitochondrion inner membrane</keyword>
<keyword id="KW-1274">Primary mitochondrial disease</keyword>
<keyword id="KW-1267">Proteomics identification</keyword>
<keyword id="KW-1185">Reference proteome</keyword>
<keyword id="KW-0679">Respiratory chain</keyword>
<keyword id="KW-0812">Transmembrane</keyword>
<keyword id="KW-1133">Transmembrane helix</keyword>
<keyword id="KW-0813">Transport</keyword>
<accession>O43676</accession>
<accession>Q6IB80</accession>
<reference key="1">
    <citation type="journal article" date="1997" name="Biochem. Biophys. Res. Commun.">
        <title>Identification and primary structure of five human NADH-ubiquinone oxidoreductase subunits.</title>
        <authorList>
            <person name="Ton C."/>
            <person name="Hwang D.M."/>
            <person name="Dempsey A.A."/>
            <person name="Liew C.-C."/>
        </authorList>
    </citation>
    <scope>NUCLEOTIDE SEQUENCE [MRNA]</scope>
    <source>
        <tissue>Heart</tissue>
    </source>
</reference>
<reference key="2">
    <citation type="journal article" date="1998" name="Biochem. Biophys. Res. Commun.">
        <title>cDNA of eight nuclear encoded subunits of NADH:ubiquinone oxidoreductase: human complex I cDNA characterization completed.</title>
        <authorList>
            <person name="Loeffen J.L.C.M."/>
            <person name="Triepels R.H."/>
            <person name="van den Heuvel L.P."/>
            <person name="Schuelke M."/>
            <person name="Buskens C.A.F."/>
            <person name="Smeets R.J.P."/>
            <person name="Trijbels J.M.F."/>
            <person name="Smeitink J.A.M."/>
        </authorList>
    </citation>
    <scope>NUCLEOTIDE SEQUENCE [MRNA]</scope>
</reference>
<reference key="3">
    <citation type="submission" date="2004-06" db="EMBL/GenBank/DDBJ databases">
        <title>Cloning of human full open reading frames in Gateway(TM) system entry vector (pDONR201).</title>
        <authorList>
            <person name="Ebert L."/>
            <person name="Schick M."/>
            <person name="Neubert P."/>
            <person name="Schatten R."/>
            <person name="Henze S."/>
            <person name="Korn B."/>
        </authorList>
    </citation>
    <scope>NUCLEOTIDE SEQUENCE [LARGE SCALE MRNA]</scope>
</reference>
<reference key="4">
    <citation type="journal article" date="2005" name="Nature">
        <title>Generation and annotation of the DNA sequences of human chromosomes 2 and 4.</title>
        <authorList>
            <person name="Hillier L.W."/>
            <person name="Graves T.A."/>
            <person name="Fulton R.S."/>
            <person name="Fulton L.A."/>
            <person name="Pepin K.H."/>
            <person name="Minx P."/>
            <person name="Wagner-McPherson C."/>
            <person name="Layman D."/>
            <person name="Wylie K."/>
            <person name="Sekhon M."/>
            <person name="Becker M.C."/>
            <person name="Fewell G.A."/>
            <person name="Delehaunty K.D."/>
            <person name="Miner T.L."/>
            <person name="Nash W.E."/>
            <person name="Kremitzki C."/>
            <person name="Oddy L."/>
            <person name="Du H."/>
            <person name="Sun H."/>
            <person name="Bradshaw-Cordum H."/>
            <person name="Ali J."/>
            <person name="Carter J."/>
            <person name="Cordes M."/>
            <person name="Harris A."/>
            <person name="Isak A."/>
            <person name="van Brunt A."/>
            <person name="Nguyen C."/>
            <person name="Du F."/>
            <person name="Courtney L."/>
            <person name="Kalicki J."/>
            <person name="Ozersky P."/>
            <person name="Abbott S."/>
            <person name="Armstrong J."/>
            <person name="Belter E.A."/>
            <person name="Caruso L."/>
            <person name="Cedroni M."/>
            <person name="Cotton M."/>
            <person name="Davidson T."/>
            <person name="Desai A."/>
            <person name="Elliott G."/>
            <person name="Erb T."/>
            <person name="Fronick C."/>
            <person name="Gaige T."/>
            <person name="Haakenson W."/>
            <person name="Haglund K."/>
            <person name="Holmes A."/>
            <person name="Harkins R."/>
            <person name="Kim K."/>
            <person name="Kruchowski S.S."/>
            <person name="Strong C.M."/>
            <person name="Grewal N."/>
            <person name="Goyea E."/>
            <person name="Hou S."/>
            <person name="Levy A."/>
            <person name="Martinka S."/>
            <person name="Mead K."/>
            <person name="McLellan M.D."/>
            <person name="Meyer R."/>
            <person name="Randall-Maher J."/>
            <person name="Tomlinson C."/>
            <person name="Dauphin-Kohlberg S."/>
            <person name="Kozlowicz-Reilly A."/>
            <person name="Shah N."/>
            <person name="Swearengen-Shahid S."/>
            <person name="Snider J."/>
            <person name="Strong J.T."/>
            <person name="Thompson J."/>
            <person name="Yoakum M."/>
            <person name="Leonard S."/>
            <person name="Pearman C."/>
            <person name="Trani L."/>
            <person name="Radionenko M."/>
            <person name="Waligorski J.E."/>
            <person name="Wang C."/>
            <person name="Rock S.M."/>
            <person name="Tin-Wollam A.-M."/>
            <person name="Maupin R."/>
            <person name="Latreille P."/>
            <person name="Wendl M.C."/>
            <person name="Yang S.-P."/>
            <person name="Pohl C."/>
            <person name="Wallis J.W."/>
            <person name="Spieth J."/>
            <person name="Bieri T.A."/>
            <person name="Berkowicz N."/>
            <person name="Nelson J.O."/>
            <person name="Osborne J."/>
            <person name="Ding L."/>
            <person name="Meyer R."/>
            <person name="Sabo A."/>
            <person name="Shotland Y."/>
            <person name="Sinha P."/>
            <person name="Wohldmann P.E."/>
            <person name="Cook L.L."/>
            <person name="Hickenbotham M.T."/>
            <person name="Eldred J."/>
            <person name="Williams D."/>
            <person name="Jones T.A."/>
            <person name="She X."/>
            <person name="Ciccarelli F.D."/>
            <person name="Izaurralde E."/>
            <person name="Taylor J."/>
            <person name="Schmutz J."/>
            <person name="Myers R.M."/>
            <person name="Cox D.R."/>
            <person name="Huang X."/>
            <person name="McPherson J.D."/>
            <person name="Mardis E.R."/>
            <person name="Clifton S.W."/>
            <person name="Warren W.C."/>
            <person name="Chinwalla A.T."/>
            <person name="Eddy S.R."/>
            <person name="Marra M.A."/>
            <person name="Ovcharenko I."/>
            <person name="Furey T.S."/>
            <person name="Miller W."/>
            <person name="Eichler E.E."/>
            <person name="Bork P."/>
            <person name="Suyama M."/>
            <person name="Torrents D."/>
            <person name="Waterston R.H."/>
            <person name="Wilson R.K."/>
        </authorList>
    </citation>
    <scope>NUCLEOTIDE SEQUENCE [LARGE SCALE GENOMIC DNA]</scope>
</reference>
<reference key="5">
    <citation type="submission" date="2005-07" db="EMBL/GenBank/DDBJ databases">
        <authorList>
            <person name="Mural R.J."/>
            <person name="Istrail S."/>
            <person name="Sutton G."/>
            <person name="Florea L."/>
            <person name="Halpern A.L."/>
            <person name="Mobarry C.M."/>
            <person name="Lippert R."/>
            <person name="Walenz B."/>
            <person name="Shatkay H."/>
            <person name="Dew I."/>
            <person name="Miller J.R."/>
            <person name="Flanigan M.J."/>
            <person name="Edwards N.J."/>
            <person name="Bolanos R."/>
            <person name="Fasulo D."/>
            <person name="Halldorsson B.V."/>
            <person name="Hannenhalli S."/>
            <person name="Turner R."/>
            <person name="Yooseph S."/>
            <person name="Lu F."/>
            <person name="Nusskern D.R."/>
            <person name="Shue B.C."/>
            <person name="Zheng X.H."/>
            <person name="Zhong F."/>
            <person name="Delcher A.L."/>
            <person name="Huson D.H."/>
            <person name="Kravitz S.A."/>
            <person name="Mouchard L."/>
            <person name="Reinert K."/>
            <person name="Remington K.A."/>
            <person name="Clark A.G."/>
            <person name="Waterman M.S."/>
            <person name="Eichler E.E."/>
            <person name="Adams M.D."/>
            <person name="Hunkapiller M.W."/>
            <person name="Myers E.W."/>
            <person name="Venter J.C."/>
        </authorList>
    </citation>
    <scope>NUCLEOTIDE SEQUENCE [LARGE SCALE GENOMIC DNA]</scope>
</reference>
<reference key="6">
    <citation type="journal article" date="2004" name="Genome Res.">
        <title>The status, quality, and expansion of the NIH full-length cDNA project: the Mammalian Gene Collection (MGC).</title>
        <authorList>
            <consortium name="The MGC Project Team"/>
        </authorList>
    </citation>
    <scope>NUCLEOTIDE SEQUENCE [LARGE SCALE MRNA]</scope>
    <source>
        <tissue>Lung</tissue>
    </source>
</reference>
<reference key="7">
    <citation type="journal article" date="2003" name="J. Biol. Chem.">
        <title>The subunit composition of the human NADH dehydrogenase obtained by rapid one-step immunopurification.</title>
        <authorList>
            <person name="Murray J."/>
            <person name="Zhang B."/>
            <person name="Taylor S.W."/>
            <person name="Oglesbee D."/>
            <person name="Fahy E."/>
            <person name="Marusich M.F."/>
            <person name="Ghosh S.S."/>
            <person name="Capaldi R.A."/>
        </authorList>
    </citation>
    <scope>IDENTIFICATION IN THE NADH-UBIQUINONE OXIDOREDUCTASE COMPLEX</scope>
    <scope>IDENTIFICATION BY MASS SPECTROMETRY</scope>
    <scope>SUBCELLULAR LOCATION</scope>
</reference>
<reference key="8">
    <citation type="journal article" date="2011" name="BMC Syst. Biol.">
        <title>Initial characterization of the human central proteome.</title>
        <authorList>
            <person name="Burkard T.R."/>
            <person name="Planyavsky M."/>
            <person name="Kaupe I."/>
            <person name="Breitwieser F.P."/>
            <person name="Buerckstuemmer T."/>
            <person name="Bennett K.L."/>
            <person name="Superti-Furga G."/>
            <person name="Colinge J."/>
        </authorList>
    </citation>
    <scope>IDENTIFICATION BY MASS SPECTROMETRY [LARGE SCALE ANALYSIS]</scope>
</reference>
<reference key="9">
    <citation type="journal article" date="2012" name="J. Med. Genet.">
        <title>Molecular diagnosis in mitochondrial complex I deficiency using exome sequencing.</title>
        <authorList>
            <person name="Haack T.B."/>
            <person name="Haberberger B."/>
            <person name="Frisch E.M."/>
            <person name="Wieland T."/>
            <person name="Iuso A."/>
            <person name="Gorza M."/>
            <person name="Strecker V."/>
            <person name="Graf E."/>
            <person name="Mayr J.A."/>
            <person name="Herberg U."/>
            <person name="Hennermann J.B."/>
            <person name="Klopstock T."/>
            <person name="Kuhn K.A."/>
            <person name="Ahting U."/>
            <person name="Sperl W."/>
            <person name="Wilichowski E."/>
            <person name="Hoffmann G.F."/>
            <person name="Tesarova M."/>
            <person name="Hansikova H."/>
            <person name="Zeman J."/>
            <person name="Plecko B."/>
            <person name="Zeviani M."/>
            <person name="Wittig I."/>
            <person name="Strom T.M."/>
            <person name="Schuelke M."/>
            <person name="Freisinger P."/>
            <person name="Meitinger T."/>
            <person name="Prokisch H."/>
        </authorList>
    </citation>
    <scope>INVOLVEMENT IN MC1DN25</scope>
    <scope>VARIANTS MC1DN25 ARG-22 AND 70-GLY--HIS-98 DEL</scope>
</reference>
<reference key="10">
    <citation type="journal article" date="2015" name="Proteomics">
        <title>N-terminome analysis of the human mitochondrial proteome.</title>
        <authorList>
            <person name="Vaca Jacome A.S."/>
            <person name="Rabilloud T."/>
            <person name="Schaeffer-Reiss C."/>
            <person name="Rompais M."/>
            <person name="Ayoub D."/>
            <person name="Lane L."/>
            <person name="Bairoch A."/>
            <person name="Van Dorsselaer A."/>
            <person name="Carapito C."/>
        </authorList>
    </citation>
    <scope>IDENTIFICATION BY MASS SPECTROMETRY [LARGE SCALE ANALYSIS]</scope>
</reference>
<reference key="11">
    <citation type="journal article" date="2016" name="Nature">
        <title>Accessory subunits are integral for assembly and function of human mitochondrial complex I.</title>
        <authorList>
            <person name="Stroud D.A."/>
            <person name="Surgenor E.E."/>
            <person name="Formosa L.E."/>
            <person name="Reljic B."/>
            <person name="Frazier A.E."/>
            <person name="Dibley M.G."/>
            <person name="Osellame L.D."/>
            <person name="Stait T."/>
            <person name="Beilharz T.H."/>
            <person name="Thorburn D.R."/>
            <person name="Salim A."/>
            <person name="Ryan M.T."/>
        </authorList>
    </citation>
    <scope>FUNCTION</scope>
    <scope>IDENTIFICATION IN THE NADH-UBIQUINONE OXIDOREDUCTASE COMPLEX</scope>
</reference>
<reference key="12">
    <citation type="journal article" date="2021" name="Nat. Commun.">
        <title>The methyltransferase METTL9 mediates pervasive 1-methylhistidine modification in mammalian proteomes.</title>
        <authorList>
            <person name="Davydova E."/>
            <person name="Shimazu T."/>
            <person name="Schuhmacher M.K."/>
            <person name="Jakobsson M.E."/>
            <person name="Willemen H.L.D.M."/>
            <person name="Liu T."/>
            <person name="Moen A."/>
            <person name="Ho A.Y.Y."/>
            <person name="Malecki J."/>
            <person name="Schroer L."/>
            <person name="Pinto R."/>
            <person name="Suzuki T."/>
            <person name="Groensberg I.A."/>
            <person name="Sohtome Y."/>
            <person name="Akakabe M."/>
            <person name="Weirich S."/>
            <person name="Kikuchi M."/>
            <person name="Olsen J.V."/>
            <person name="Dohmae N."/>
            <person name="Umehara T."/>
            <person name="Sodeoka M."/>
            <person name="Siino V."/>
            <person name="McDonough M.A."/>
            <person name="Eijkelkamp N."/>
            <person name="Schofield C.J."/>
            <person name="Jeltsch A."/>
            <person name="Shinkai Y."/>
            <person name="Falnes P.O."/>
        </authorList>
    </citation>
    <scope>METHYLATION AT HIS-5; HIS-7 AND HIS-9</scope>
    <scope>MUTAGENESIS OF 5-HIS--HIS-9</scope>
</reference>
<reference key="13">
    <citation type="journal article" date="2016" name="J. Med. Genet.">
        <title>A recurrent mitochondrial p.Trp22Arg NDUFB3 variant causes a distinctive facial appearance, short stature and a mild biochemical and clinical phenotype.</title>
        <authorList>
            <person name="Alston C.L."/>
            <person name="Howard C."/>
            <person name="Olahova M."/>
            <person name="Hardy S.A."/>
            <person name="He L."/>
            <person name="Murray P.G."/>
            <person name="O'Sullivan S."/>
            <person name="Doherty G."/>
            <person name="Shield J.P."/>
            <person name="Hargreaves I.P."/>
            <person name="Monavari A.A."/>
            <person name="Knerr I."/>
            <person name="McCarthy P."/>
            <person name="Morris A.A."/>
            <person name="Thorburn D.R."/>
            <person name="Prokisch H."/>
            <person name="Clayton P.E."/>
            <person name="McFarland R."/>
            <person name="Hughes J."/>
            <person name="Crushell E."/>
            <person name="Taylor R.W."/>
        </authorList>
    </citation>
    <scope>VARIANT MC1DN25 ARG-22</scope>
</reference>
<organism>
    <name type="scientific">Homo sapiens</name>
    <name type="common">Human</name>
    <dbReference type="NCBI Taxonomy" id="9606"/>
    <lineage>
        <taxon>Eukaryota</taxon>
        <taxon>Metazoa</taxon>
        <taxon>Chordata</taxon>
        <taxon>Craniata</taxon>
        <taxon>Vertebrata</taxon>
        <taxon>Euteleostomi</taxon>
        <taxon>Mammalia</taxon>
        <taxon>Eutheria</taxon>
        <taxon>Euarchontoglires</taxon>
        <taxon>Primates</taxon>
        <taxon>Haplorrhini</taxon>
        <taxon>Catarrhini</taxon>
        <taxon>Hominidae</taxon>
        <taxon>Homo</taxon>
    </lineage>
</organism>
<evidence type="ECO:0000250" key="1">
    <source>
        <dbReference type="UniProtKB" id="Q02365"/>
    </source>
</evidence>
<evidence type="ECO:0000250" key="2">
    <source>
        <dbReference type="UniProtKB" id="Q9CQZ6"/>
    </source>
</evidence>
<evidence type="ECO:0000255" key="3"/>
<evidence type="ECO:0000269" key="4">
    <source>
    </source>
</evidence>
<evidence type="ECO:0000269" key="5">
    <source>
    </source>
</evidence>
<evidence type="ECO:0000269" key="6">
    <source>
    </source>
</evidence>
<evidence type="ECO:0000269" key="7">
    <source>
    </source>
</evidence>
<evidence type="ECO:0000269" key="8">
    <source>
    </source>
</evidence>
<evidence type="ECO:0000305" key="9"/>
<evidence type="ECO:0000305" key="10">
    <source>
    </source>
</evidence>
<name>NDUB3_HUMAN</name>
<dbReference type="EMBL" id="AF047183">
    <property type="protein sequence ID" value="AAC04268.1"/>
    <property type="molecule type" value="mRNA"/>
</dbReference>
<dbReference type="EMBL" id="AF035839">
    <property type="protein sequence ID" value="AAC15590.1"/>
    <property type="molecule type" value="mRNA"/>
</dbReference>
<dbReference type="EMBL" id="CR456924">
    <property type="protein sequence ID" value="CAG33205.1"/>
    <property type="molecule type" value="mRNA"/>
</dbReference>
<dbReference type="EMBL" id="AC007272">
    <property type="protein sequence ID" value="AAX88972.1"/>
    <property type="molecule type" value="Genomic_DNA"/>
</dbReference>
<dbReference type="EMBL" id="CH471063">
    <property type="protein sequence ID" value="EAW70233.1"/>
    <property type="molecule type" value="Genomic_DNA"/>
</dbReference>
<dbReference type="EMBL" id="BC018183">
    <property type="protein sequence ID" value="AAH18183.1"/>
    <property type="molecule type" value="mRNA"/>
</dbReference>
<dbReference type="CCDS" id="CCDS2336.1"/>
<dbReference type="PIR" id="JC5822">
    <property type="entry name" value="JC5822"/>
</dbReference>
<dbReference type="RefSeq" id="NP_001244031.1">
    <property type="nucleotide sequence ID" value="NM_001257102.2"/>
</dbReference>
<dbReference type="RefSeq" id="NP_002482.1">
    <property type="nucleotide sequence ID" value="NM_002491.3"/>
</dbReference>
<dbReference type="RefSeq" id="XP_011509532.1">
    <property type="nucleotide sequence ID" value="XM_011511230.4"/>
</dbReference>
<dbReference type="RefSeq" id="XP_016859675.1">
    <property type="nucleotide sequence ID" value="XM_017004186.1"/>
</dbReference>
<dbReference type="RefSeq" id="XP_047300444.1">
    <property type="nucleotide sequence ID" value="XM_047444488.1"/>
</dbReference>
<dbReference type="RefSeq" id="XP_054198228.1">
    <property type="nucleotide sequence ID" value="XM_054342253.1"/>
</dbReference>
<dbReference type="RefSeq" id="XP_054198229.1">
    <property type="nucleotide sequence ID" value="XM_054342254.1"/>
</dbReference>
<dbReference type="PDB" id="5XTC">
    <property type="method" value="EM"/>
    <property type="resolution" value="3.70 A"/>
    <property type="chains" value="Z=10-89"/>
</dbReference>
<dbReference type="PDB" id="5XTD">
    <property type="method" value="EM"/>
    <property type="resolution" value="3.70 A"/>
    <property type="chains" value="Z=10-89"/>
</dbReference>
<dbReference type="PDB" id="5XTH">
    <property type="method" value="EM"/>
    <property type="resolution" value="3.90 A"/>
    <property type="chains" value="Z=10-89"/>
</dbReference>
<dbReference type="PDB" id="5XTI">
    <property type="method" value="EM"/>
    <property type="resolution" value="17.40 A"/>
    <property type="chains" value="BZ/Z=10-89"/>
</dbReference>
<dbReference type="PDBsum" id="5XTC"/>
<dbReference type="PDBsum" id="5XTD"/>
<dbReference type="PDBsum" id="5XTH"/>
<dbReference type="PDBsum" id="5XTI"/>
<dbReference type="SMR" id="O43676"/>
<dbReference type="BioGRID" id="110789">
    <property type="interactions" value="105"/>
</dbReference>
<dbReference type="ComplexPortal" id="CPX-577">
    <property type="entry name" value="Mitochondrial respiratory chain complex I"/>
</dbReference>
<dbReference type="CORUM" id="O43676"/>
<dbReference type="FunCoup" id="O43676">
    <property type="interactions" value="562"/>
</dbReference>
<dbReference type="IntAct" id="O43676">
    <property type="interactions" value="91"/>
</dbReference>
<dbReference type="MINT" id="O43676"/>
<dbReference type="STRING" id="9606.ENSP00000407336"/>
<dbReference type="BindingDB" id="O43676"/>
<dbReference type="ChEMBL" id="CHEMBL2363065"/>
<dbReference type="DrugBank" id="DB00157">
    <property type="generic name" value="NADH"/>
</dbReference>
<dbReference type="DrugCentral" id="O43676"/>
<dbReference type="iPTMnet" id="O43676"/>
<dbReference type="PhosphoSitePlus" id="O43676"/>
<dbReference type="BioMuta" id="NDUFB3"/>
<dbReference type="jPOST" id="O43676"/>
<dbReference type="MassIVE" id="O43676"/>
<dbReference type="PaxDb" id="9606-ENSP00000237889"/>
<dbReference type="PeptideAtlas" id="O43676"/>
<dbReference type="ProteomicsDB" id="49104"/>
<dbReference type="Pumba" id="O43676"/>
<dbReference type="TopDownProteomics" id="O43676"/>
<dbReference type="Antibodypedia" id="34135">
    <property type="antibodies" value="135 antibodies from 27 providers"/>
</dbReference>
<dbReference type="DNASU" id="4709"/>
<dbReference type="Ensembl" id="ENST00000237889.9">
    <property type="protein sequence ID" value="ENSP00000237889.4"/>
    <property type="gene ID" value="ENSG00000119013.10"/>
</dbReference>
<dbReference type="Ensembl" id="ENST00000433898.5">
    <property type="protein sequence ID" value="ENSP00000410600.1"/>
    <property type="gene ID" value="ENSG00000119013.10"/>
</dbReference>
<dbReference type="Ensembl" id="ENST00000450023.6">
    <property type="protein sequence ID" value="ENSP00000401834.2"/>
    <property type="gene ID" value="ENSG00000119013.10"/>
</dbReference>
<dbReference type="Ensembl" id="ENST00000454214.1">
    <property type="protein sequence ID" value="ENSP00000407336.1"/>
    <property type="gene ID" value="ENSG00000119013.10"/>
</dbReference>
<dbReference type="Ensembl" id="ENST00000682325.1">
    <property type="protein sequence ID" value="ENSP00000507925.1"/>
    <property type="gene ID" value="ENSG00000119013.10"/>
</dbReference>
<dbReference type="Ensembl" id="ENST00000684175.1">
    <property type="protein sequence ID" value="ENSP00000508132.1"/>
    <property type="gene ID" value="ENSG00000119013.10"/>
</dbReference>
<dbReference type="Ensembl" id="ENST00000684420.1">
    <property type="protein sequence ID" value="ENSP00000508208.1"/>
    <property type="gene ID" value="ENSG00000119013.10"/>
</dbReference>
<dbReference type="GeneID" id="4709"/>
<dbReference type="KEGG" id="hsa:4709"/>
<dbReference type="MANE-Select" id="ENST00000237889.9">
    <property type="protein sequence ID" value="ENSP00000237889.4"/>
    <property type="RefSeq nucleotide sequence ID" value="NM_002491.3"/>
    <property type="RefSeq protein sequence ID" value="NP_002482.1"/>
</dbReference>
<dbReference type="UCSC" id="uc002uwx.6">
    <property type="organism name" value="human"/>
</dbReference>
<dbReference type="AGR" id="HGNC:7698"/>
<dbReference type="CTD" id="4709"/>
<dbReference type="DisGeNET" id="4709"/>
<dbReference type="GeneCards" id="NDUFB3"/>
<dbReference type="HGNC" id="HGNC:7698">
    <property type="gene designation" value="NDUFB3"/>
</dbReference>
<dbReference type="HPA" id="ENSG00000119013">
    <property type="expression patterns" value="Tissue enhanced (skeletal muscle, tongue)"/>
</dbReference>
<dbReference type="MalaCards" id="NDUFB3"/>
<dbReference type="MIM" id="603839">
    <property type="type" value="gene"/>
</dbReference>
<dbReference type="MIM" id="618246">
    <property type="type" value="phenotype"/>
</dbReference>
<dbReference type="neXtProt" id="NX_O43676"/>
<dbReference type="OpenTargets" id="ENSG00000119013"/>
<dbReference type="Orphanet" id="2609">
    <property type="disease" value="Isolated complex I deficiency"/>
</dbReference>
<dbReference type="PharmGKB" id="PA31504"/>
<dbReference type="VEuPathDB" id="HostDB:ENSG00000119013"/>
<dbReference type="eggNOG" id="KOG4631">
    <property type="taxonomic scope" value="Eukaryota"/>
</dbReference>
<dbReference type="GeneTree" id="ENSGT00390000010316"/>
<dbReference type="HOGENOM" id="CLU_160226_1_0_1"/>
<dbReference type="InParanoid" id="O43676"/>
<dbReference type="OMA" id="YMGGFAH"/>
<dbReference type="OrthoDB" id="521512at2759"/>
<dbReference type="PAN-GO" id="O43676">
    <property type="GO annotations" value="2 GO annotations based on evolutionary models"/>
</dbReference>
<dbReference type="PhylomeDB" id="O43676"/>
<dbReference type="TreeFam" id="TF319656"/>
<dbReference type="BioCyc" id="MetaCyc:HS04271-MONOMER"/>
<dbReference type="PathwayCommons" id="O43676"/>
<dbReference type="Reactome" id="R-HSA-611105">
    <property type="pathway name" value="Respiratory electron transport"/>
</dbReference>
<dbReference type="Reactome" id="R-HSA-6799198">
    <property type="pathway name" value="Complex I biogenesis"/>
</dbReference>
<dbReference type="SignaLink" id="O43676"/>
<dbReference type="SIGNOR" id="O43676"/>
<dbReference type="BioGRID-ORCS" id="4709">
    <property type="hits" value="436 hits in 1068 CRISPR screens"/>
</dbReference>
<dbReference type="ChiTaRS" id="NDUFB3">
    <property type="organism name" value="human"/>
</dbReference>
<dbReference type="GenomeRNAi" id="4709"/>
<dbReference type="Pharos" id="O43676">
    <property type="development level" value="Tclin"/>
</dbReference>
<dbReference type="PRO" id="PR:O43676"/>
<dbReference type="Proteomes" id="UP000005640">
    <property type="component" value="Chromosome 2"/>
</dbReference>
<dbReference type="RNAct" id="O43676">
    <property type="molecule type" value="protein"/>
</dbReference>
<dbReference type="Bgee" id="ENSG00000119013">
    <property type="expression patterns" value="Expressed in right atrium auricular region and 207 other cell types or tissues"/>
</dbReference>
<dbReference type="ExpressionAtlas" id="O43676">
    <property type="expression patterns" value="baseline and differential"/>
</dbReference>
<dbReference type="GO" id="GO:0005743">
    <property type="term" value="C:mitochondrial inner membrane"/>
    <property type="evidence" value="ECO:0000314"/>
    <property type="project" value="ComplexPortal"/>
</dbReference>
<dbReference type="GO" id="GO:0005739">
    <property type="term" value="C:mitochondrion"/>
    <property type="evidence" value="ECO:0006056"/>
    <property type="project" value="FlyBase"/>
</dbReference>
<dbReference type="GO" id="GO:0045271">
    <property type="term" value="C:respiratory chain complex I"/>
    <property type="evidence" value="ECO:0000314"/>
    <property type="project" value="UniProtKB"/>
</dbReference>
<dbReference type="GO" id="GO:0008137">
    <property type="term" value="F:NADH dehydrogenase (ubiquinone) activity"/>
    <property type="evidence" value="ECO:0000304"/>
    <property type="project" value="ProtInc"/>
</dbReference>
<dbReference type="GO" id="GO:0009060">
    <property type="term" value="P:aerobic respiration"/>
    <property type="evidence" value="ECO:0000303"/>
    <property type="project" value="ComplexPortal"/>
</dbReference>
<dbReference type="GO" id="GO:0006120">
    <property type="term" value="P:mitochondrial electron transport, NADH to ubiquinone"/>
    <property type="evidence" value="ECO:0000304"/>
    <property type="project" value="ProtInc"/>
</dbReference>
<dbReference type="GO" id="GO:0032981">
    <property type="term" value="P:mitochondrial respiratory chain complex I assembly"/>
    <property type="evidence" value="ECO:0000318"/>
    <property type="project" value="GO_Central"/>
</dbReference>
<dbReference type="GO" id="GO:0042776">
    <property type="term" value="P:proton motive force-driven mitochondrial ATP synthesis"/>
    <property type="evidence" value="ECO:0000303"/>
    <property type="project" value="ComplexPortal"/>
</dbReference>
<dbReference type="InterPro" id="IPR012576">
    <property type="entry name" value="NDUFB3"/>
</dbReference>
<dbReference type="PANTHER" id="PTHR15082:SF2">
    <property type="entry name" value="NADH DEHYDROGENASE [UBIQUINONE] 1 BETA SUBCOMPLEX SUBUNIT 3"/>
    <property type="match status" value="1"/>
</dbReference>
<dbReference type="PANTHER" id="PTHR15082">
    <property type="entry name" value="NADH-UBIQUINONE OXIDOREDUCTASE B12 SUBUNIT"/>
    <property type="match status" value="1"/>
</dbReference>
<dbReference type="Pfam" id="PF08122">
    <property type="entry name" value="NDUF_B12"/>
    <property type="match status" value="1"/>
</dbReference>
<proteinExistence type="evidence at protein level"/>
<sequence>MAHEHGHEHGHHKMELPDYRQWKIEGTPLETIQKKLAAKGLRDPWGRNEAWRYMGGFAKSVSFSDVFFKGFKWGFAAFVVAVGAEYYLESLNKDKKHH</sequence>
<protein>
    <recommendedName>
        <fullName>NADH dehydrogenase [ubiquinone] 1 beta subcomplex subunit 3</fullName>
    </recommendedName>
    <alternativeName>
        <fullName>Complex I-B12</fullName>
        <shortName>CI-B12</shortName>
    </alternativeName>
    <alternativeName>
        <fullName>NADH-ubiquinone oxidoreductase B12 subunit</fullName>
    </alternativeName>
</protein>
<feature type="initiator methionine" description="Removed" evidence="1">
    <location>
        <position position="1"/>
    </location>
</feature>
<feature type="chain" id="PRO_0000118797" description="NADH dehydrogenase [ubiquinone] 1 beta subcomplex subunit 3">
    <location>
        <begin position="2"/>
        <end position="98"/>
    </location>
</feature>
<feature type="transmembrane region" description="Helical" evidence="3">
    <location>
        <begin position="66"/>
        <end position="88"/>
    </location>
</feature>
<feature type="modified residue" description="N-acetylalanine" evidence="1">
    <location>
        <position position="2"/>
    </location>
</feature>
<feature type="modified residue" description="Pros-methylhistidine" evidence="8">
    <location>
        <position position="5"/>
    </location>
</feature>
<feature type="modified residue" description="Pros-methylhistidine" evidence="8">
    <location>
        <position position="7"/>
    </location>
</feature>
<feature type="modified residue" description="Pros-methylhistidine" evidence="8">
    <location>
        <position position="9"/>
    </location>
</feature>
<feature type="modified residue" description="N6-acetyllysine; alternate" evidence="2">
    <location>
        <position position="23"/>
    </location>
</feature>
<feature type="modified residue" description="N6-succinyllysine; alternate" evidence="2">
    <location>
        <position position="23"/>
    </location>
</feature>
<feature type="modified residue" description="N6-acetyllysine; alternate" evidence="2">
    <location>
        <position position="34"/>
    </location>
</feature>
<feature type="modified residue" description="N6-succinyllysine; alternate" evidence="2">
    <location>
        <position position="34"/>
    </location>
</feature>
<feature type="sequence variant" id="VAR_078939" description="In MC1DN25; dbSNP:rs142609245." evidence="5 6">
    <original>W</original>
    <variation>R</variation>
    <location>
        <position position="22"/>
    </location>
</feature>
<feature type="sequence variant" id="VAR_078940" description="In MC1DN25." evidence="5">
    <location>
        <begin position="70"/>
        <end position="98"/>
    </location>
</feature>
<feature type="mutagenesis site" description="Abolished histidine methylation by METTL9." evidence="8">
    <original>HGHEH</original>
    <variation>RGHER</variation>
    <location>
        <begin position="5"/>
        <end position="9"/>
    </location>
</feature>